<sequence length="286" mass="32827">MSIQFNQVSYIYQQGTPYEFEAIKNVSLTLEQGKYYAIIGQTGSGKSTLIQHLNALLKPTTGSVNINGLEVTNKTKDKHLRHIRKEVGIVFQFPESQLFEDSVEKEIEFGPKNFNMNLKNVKDKAFQLLLELGFSRNVMSSSPFQMSGGQMRKIAIVSILAMDPQVIILDEPTAGLDPNSKHQVMSLIKKIQIEENKTIILVSHDMDDVARYSDEVVVMNKGTIVEKSNPRNLFSQKTQLLKWHIELPKVVKLQKDIEKKYNMLFPKLATNEEEFVKLYKEWHHEK</sequence>
<dbReference type="EC" id="7.-.-.-" evidence="1"/>
<dbReference type="EMBL" id="AE015929">
    <property type="protein sequence ID" value="AAO05435.1"/>
    <property type="molecule type" value="Genomic_DNA"/>
</dbReference>
<dbReference type="RefSeq" id="NP_765349.1">
    <property type="nucleotide sequence ID" value="NC_004461.1"/>
</dbReference>
<dbReference type="RefSeq" id="WP_002485386.1">
    <property type="nucleotide sequence ID" value="NZ_WBME01000007.1"/>
</dbReference>
<dbReference type="SMR" id="Q8CRI7"/>
<dbReference type="KEGG" id="sep:SE_1794"/>
<dbReference type="PATRIC" id="fig|176280.10.peg.1751"/>
<dbReference type="eggNOG" id="COG1122">
    <property type="taxonomic scope" value="Bacteria"/>
</dbReference>
<dbReference type="HOGENOM" id="CLU_000604_1_22_9"/>
<dbReference type="OrthoDB" id="9784332at2"/>
<dbReference type="Proteomes" id="UP000001411">
    <property type="component" value="Chromosome"/>
</dbReference>
<dbReference type="GO" id="GO:0043190">
    <property type="term" value="C:ATP-binding cassette (ABC) transporter complex"/>
    <property type="evidence" value="ECO:0007669"/>
    <property type="project" value="TreeGrafter"/>
</dbReference>
<dbReference type="GO" id="GO:0005524">
    <property type="term" value="F:ATP binding"/>
    <property type="evidence" value="ECO:0007669"/>
    <property type="project" value="UniProtKB-KW"/>
</dbReference>
<dbReference type="GO" id="GO:0016887">
    <property type="term" value="F:ATP hydrolysis activity"/>
    <property type="evidence" value="ECO:0007669"/>
    <property type="project" value="InterPro"/>
</dbReference>
<dbReference type="GO" id="GO:0042626">
    <property type="term" value="F:ATPase-coupled transmembrane transporter activity"/>
    <property type="evidence" value="ECO:0007669"/>
    <property type="project" value="TreeGrafter"/>
</dbReference>
<dbReference type="CDD" id="cd03225">
    <property type="entry name" value="ABC_cobalt_CbiO_domain1"/>
    <property type="match status" value="1"/>
</dbReference>
<dbReference type="FunFam" id="3.40.50.300:FF:000224">
    <property type="entry name" value="Energy-coupling factor transporter ATP-binding protein EcfA"/>
    <property type="match status" value="1"/>
</dbReference>
<dbReference type="Gene3D" id="3.40.50.300">
    <property type="entry name" value="P-loop containing nucleotide triphosphate hydrolases"/>
    <property type="match status" value="1"/>
</dbReference>
<dbReference type="InterPro" id="IPR003593">
    <property type="entry name" value="AAA+_ATPase"/>
</dbReference>
<dbReference type="InterPro" id="IPR003439">
    <property type="entry name" value="ABC_transporter-like_ATP-bd"/>
</dbReference>
<dbReference type="InterPro" id="IPR017871">
    <property type="entry name" value="ABC_transporter-like_CS"/>
</dbReference>
<dbReference type="InterPro" id="IPR015856">
    <property type="entry name" value="ABC_transpr_CbiO/EcfA_su"/>
</dbReference>
<dbReference type="InterPro" id="IPR050095">
    <property type="entry name" value="ECF_ABC_transporter_ATP-bd"/>
</dbReference>
<dbReference type="InterPro" id="IPR030946">
    <property type="entry name" value="EcfA2"/>
</dbReference>
<dbReference type="InterPro" id="IPR027417">
    <property type="entry name" value="P-loop_NTPase"/>
</dbReference>
<dbReference type="NCBIfam" id="TIGR04521">
    <property type="entry name" value="ECF_ATPase_2"/>
    <property type="match status" value="1"/>
</dbReference>
<dbReference type="NCBIfam" id="NF010166">
    <property type="entry name" value="PRK13646.1"/>
    <property type="match status" value="1"/>
</dbReference>
<dbReference type="PANTHER" id="PTHR43553:SF27">
    <property type="entry name" value="ENERGY-COUPLING FACTOR TRANSPORTER ATP-BINDING PROTEIN ECFA2"/>
    <property type="match status" value="1"/>
</dbReference>
<dbReference type="PANTHER" id="PTHR43553">
    <property type="entry name" value="HEAVY METAL TRANSPORTER"/>
    <property type="match status" value="1"/>
</dbReference>
<dbReference type="Pfam" id="PF00005">
    <property type="entry name" value="ABC_tran"/>
    <property type="match status" value="1"/>
</dbReference>
<dbReference type="SMART" id="SM00382">
    <property type="entry name" value="AAA"/>
    <property type="match status" value="1"/>
</dbReference>
<dbReference type="SUPFAM" id="SSF52540">
    <property type="entry name" value="P-loop containing nucleoside triphosphate hydrolases"/>
    <property type="match status" value="1"/>
</dbReference>
<dbReference type="PROSITE" id="PS00211">
    <property type="entry name" value="ABC_TRANSPORTER_1"/>
    <property type="match status" value="1"/>
</dbReference>
<dbReference type="PROSITE" id="PS50893">
    <property type="entry name" value="ABC_TRANSPORTER_2"/>
    <property type="match status" value="1"/>
</dbReference>
<dbReference type="PROSITE" id="PS51246">
    <property type="entry name" value="CBIO"/>
    <property type="match status" value="1"/>
</dbReference>
<organism>
    <name type="scientific">Staphylococcus epidermidis (strain ATCC 12228 / FDA PCI 1200)</name>
    <dbReference type="NCBI Taxonomy" id="176280"/>
    <lineage>
        <taxon>Bacteria</taxon>
        <taxon>Bacillati</taxon>
        <taxon>Bacillota</taxon>
        <taxon>Bacilli</taxon>
        <taxon>Bacillales</taxon>
        <taxon>Staphylococcaceae</taxon>
        <taxon>Staphylococcus</taxon>
    </lineage>
</organism>
<keyword id="KW-0067">ATP-binding</keyword>
<keyword id="KW-1003">Cell membrane</keyword>
<keyword id="KW-0472">Membrane</keyword>
<keyword id="KW-0547">Nucleotide-binding</keyword>
<keyword id="KW-1278">Translocase</keyword>
<keyword id="KW-0813">Transport</keyword>
<protein>
    <recommendedName>
        <fullName evidence="1">Energy-coupling factor transporter ATP-binding protein EcfA2</fullName>
        <shortName evidence="1">ECF transporter A component EcfA2</shortName>
        <ecNumber evidence="1">7.-.-.-</ecNumber>
    </recommendedName>
</protein>
<proteinExistence type="inferred from homology"/>
<reference key="1">
    <citation type="journal article" date="2003" name="Mol. Microbiol.">
        <title>Genome-based analysis of virulence genes in a non-biofilm-forming Staphylococcus epidermidis strain (ATCC 12228).</title>
        <authorList>
            <person name="Zhang Y.-Q."/>
            <person name="Ren S.-X."/>
            <person name="Li H.-L."/>
            <person name="Wang Y.-X."/>
            <person name="Fu G."/>
            <person name="Yang J."/>
            <person name="Qin Z.-Q."/>
            <person name="Miao Y.-G."/>
            <person name="Wang W.-Y."/>
            <person name="Chen R.-S."/>
            <person name="Shen Y."/>
            <person name="Chen Z."/>
            <person name="Yuan Z.-H."/>
            <person name="Zhao G.-P."/>
            <person name="Qu D."/>
            <person name="Danchin A."/>
            <person name="Wen Y.-M."/>
        </authorList>
    </citation>
    <scope>NUCLEOTIDE SEQUENCE [LARGE SCALE GENOMIC DNA]</scope>
    <source>
        <strain>ATCC 12228 / FDA PCI 1200</strain>
    </source>
</reference>
<name>ECFA2_STAES</name>
<comment type="function">
    <text evidence="1">ATP-binding (A) component of a common energy-coupling factor (ECF) ABC-transporter complex. Unlike classic ABC transporters this ECF transporter provides the energy necessary to transport a number of different substrates.</text>
</comment>
<comment type="subunit">
    <text evidence="1">Forms a stable energy-coupling factor (ECF) transporter complex composed of 2 membrane-embedded substrate-binding proteins (S component), 2 ATP-binding proteins (A component) and 2 transmembrane proteins (T component).</text>
</comment>
<comment type="subcellular location">
    <subcellularLocation>
        <location evidence="1">Cell membrane</location>
        <topology evidence="1">Peripheral membrane protein</topology>
    </subcellularLocation>
</comment>
<comment type="similarity">
    <text evidence="1">Belongs to the ABC transporter superfamily. Energy-coupling factor EcfA family.</text>
</comment>
<gene>
    <name evidence="1" type="primary">ecfA2</name>
    <name type="synonym">cbiO2</name>
    <name type="ordered locus">SE_1794</name>
</gene>
<evidence type="ECO:0000255" key="1">
    <source>
        <dbReference type="HAMAP-Rule" id="MF_01710"/>
    </source>
</evidence>
<accession>Q8CRI7</accession>
<feature type="chain" id="PRO_0000092080" description="Energy-coupling factor transporter ATP-binding protein EcfA2">
    <location>
        <begin position="1"/>
        <end position="286"/>
    </location>
</feature>
<feature type="domain" description="ABC transporter" evidence="1">
    <location>
        <begin position="3"/>
        <end position="246"/>
    </location>
</feature>
<feature type="binding site" evidence="1">
    <location>
        <begin position="40"/>
        <end position="47"/>
    </location>
    <ligand>
        <name>ATP</name>
        <dbReference type="ChEBI" id="CHEBI:30616"/>
    </ligand>
</feature>